<keyword id="KW-0028">Amino-acid biosynthesis</keyword>
<keyword id="KW-0963">Cytoplasm</keyword>
<keyword id="KW-0554">One-carbon metabolism</keyword>
<keyword id="KW-0663">Pyridoxal phosphate</keyword>
<keyword id="KW-0808">Transferase</keyword>
<protein>
    <recommendedName>
        <fullName evidence="1">Serine hydroxymethyltransferase</fullName>
        <shortName evidence="1">SHMT</shortName>
        <shortName evidence="1">Serine methylase</shortName>
        <ecNumber evidence="1">2.1.2.1</ecNumber>
    </recommendedName>
</protein>
<name>GLYA_BORAP</name>
<feature type="chain" id="PRO_1000006225" description="Serine hydroxymethyltransferase">
    <location>
        <begin position="1"/>
        <end position="417"/>
    </location>
</feature>
<feature type="binding site" evidence="1">
    <location>
        <position position="112"/>
    </location>
    <ligand>
        <name>(6S)-5,6,7,8-tetrahydrofolate</name>
        <dbReference type="ChEBI" id="CHEBI:57453"/>
    </ligand>
</feature>
<feature type="binding site" evidence="1">
    <location>
        <begin position="116"/>
        <end position="118"/>
    </location>
    <ligand>
        <name>(6S)-5,6,7,8-tetrahydrofolate</name>
        <dbReference type="ChEBI" id="CHEBI:57453"/>
    </ligand>
</feature>
<feature type="binding site" evidence="1">
    <location>
        <position position="247"/>
    </location>
    <ligand>
        <name>(6S)-5,6,7,8-tetrahydrofolate</name>
        <dbReference type="ChEBI" id="CHEBI:57453"/>
    </ligand>
</feature>
<feature type="site" description="Plays an important role in substrate specificity" evidence="1">
    <location>
        <position position="220"/>
    </location>
</feature>
<feature type="modified residue" description="N6-(pyridoxal phosphate)lysine" evidence="1">
    <location>
        <position position="221"/>
    </location>
</feature>
<accession>Q0SMQ5</accession>
<accession>G0IQF2</accession>
<reference key="1">
    <citation type="journal article" date="2006" name="BMC Genomics">
        <title>Comparative genome analysis: selection pressure on the Borrelia vls cassettes is essential for infectivity.</title>
        <authorList>
            <person name="Gloeckner G."/>
            <person name="Schulte-Spechtel U."/>
            <person name="Schilhabel M."/>
            <person name="Felder M."/>
            <person name="Suehnel J."/>
            <person name="Wilske B."/>
            <person name="Platzer M."/>
        </authorList>
    </citation>
    <scope>NUCLEOTIDE SEQUENCE [LARGE SCALE GENOMIC DNA]</scope>
    <source>
        <strain>PKo</strain>
    </source>
</reference>
<reference key="2">
    <citation type="journal article" date="2011" name="J. Bacteriol.">
        <title>Whole-genome sequences of two Borrelia afzelii and two Borrelia garinii Lyme disease agent isolates.</title>
        <authorList>
            <person name="Casjens S.R."/>
            <person name="Mongodin E.F."/>
            <person name="Qiu W.G."/>
            <person name="Dunn J.J."/>
            <person name="Luft B.J."/>
            <person name="Fraser-Liggett C.M."/>
            <person name="Schutzer S.E."/>
        </authorList>
    </citation>
    <scope>NUCLEOTIDE SEQUENCE [LARGE SCALE GENOMIC DNA]</scope>
    <source>
        <strain>PKo</strain>
    </source>
</reference>
<evidence type="ECO:0000255" key="1">
    <source>
        <dbReference type="HAMAP-Rule" id="MF_00051"/>
    </source>
</evidence>
<comment type="function">
    <text evidence="1">Catalyzes the reversible interconversion of serine and glycine with tetrahydrofolate (THF) serving as the one-carbon carrier. This reaction serves as the major source of one-carbon groups required for the biosynthesis of purines, thymidylate, methionine, and other important biomolecules. Also exhibits THF-independent aldolase activity toward beta-hydroxyamino acids, producing glycine and aldehydes, via a retro-aldol mechanism.</text>
</comment>
<comment type="catalytic activity">
    <reaction evidence="1">
        <text>(6R)-5,10-methylene-5,6,7,8-tetrahydrofolate + glycine + H2O = (6S)-5,6,7,8-tetrahydrofolate + L-serine</text>
        <dbReference type="Rhea" id="RHEA:15481"/>
        <dbReference type="ChEBI" id="CHEBI:15377"/>
        <dbReference type="ChEBI" id="CHEBI:15636"/>
        <dbReference type="ChEBI" id="CHEBI:33384"/>
        <dbReference type="ChEBI" id="CHEBI:57305"/>
        <dbReference type="ChEBI" id="CHEBI:57453"/>
        <dbReference type="EC" id="2.1.2.1"/>
    </reaction>
</comment>
<comment type="cofactor">
    <cofactor evidence="1">
        <name>pyridoxal 5'-phosphate</name>
        <dbReference type="ChEBI" id="CHEBI:597326"/>
    </cofactor>
</comment>
<comment type="pathway">
    <text evidence="1">One-carbon metabolism; tetrahydrofolate interconversion.</text>
</comment>
<comment type="pathway">
    <text evidence="1">Amino-acid biosynthesis; glycine biosynthesis; glycine from L-serine: step 1/1.</text>
</comment>
<comment type="subunit">
    <text evidence="1">Homodimer.</text>
</comment>
<comment type="subcellular location">
    <subcellularLocation>
        <location evidence="1">Cytoplasm</location>
    </subcellularLocation>
</comment>
<comment type="similarity">
    <text evidence="1">Belongs to the SHMT family.</text>
</comment>
<sequence>MRDDQIFNLIEKEKLREKEHIELIASENFTSLEIRQAVGSVLTNKYAEGYPLNRYYGGCSFIDEIETLAILRAKELFGAKYANVQPHSGSQANMAAIMALINPGDRILGMQLSHGGHLTHGSRVNFSGIFFNTYFYGVSRDSELIDYDEVLKIARDCRPNLIIAGASSYSREIDFKKFREIADDVSAYLLCDIAHIAGLIVAGFHNSSIDVAHLTTSTTHKTLRGPRGGIILSGKDFNKLVTFNGKEKTLSNAVNSTVFPGTQGGPLVHVIAGKAIAFREALQENFKEYISKVIKNTKVMAEYFKSEGFRIVSGGTDNHLFLVDLSSLDLTGADAEKLLERVNITLNKNAIPFDKKSPALASGIRIGGAAITSRGLNESDSLNVAKFIVRALKTRSDIELKQIKKEVVRFIRDFDMP</sequence>
<dbReference type="EC" id="2.1.2.1" evidence="1"/>
<dbReference type="EMBL" id="CP000395">
    <property type="protein sequence ID" value="ABH01873.1"/>
    <property type="molecule type" value="Genomic_DNA"/>
</dbReference>
<dbReference type="EMBL" id="CP002933">
    <property type="protein sequence ID" value="AEL69822.1"/>
    <property type="molecule type" value="Genomic_DNA"/>
</dbReference>
<dbReference type="RefSeq" id="WP_011601119.1">
    <property type="nucleotide sequence ID" value="NC_008277.1"/>
</dbReference>
<dbReference type="SMR" id="Q0SMQ5"/>
<dbReference type="STRING" id="29518.BLA32_01260"/>
<dbReference type="KEGG" id="baf:BAPKO_0634"/>
<dbReference type="KEGG" id="bafz:BafPKo_0618"/>
<dbReference type="PATRIC" id="fig|390236.22.peg.595"/>
<dbReference type="eggNOG" id="COG0112">
    <property type="taxonomic scope" value="Bacteria"/>
</dbReference>
<dbReference type="HOGENOM" id="CLU_022477_2_1_12"/>
<dbReference type="OrthoDB" id="9803846at2"/>
<dbReference type="UniPathway" id="UPA00193"/>
<dbReference type="UniPathway" id="UPA00288">
    <property type="reaction ID" value="UER01023"/>
</dbReference>
<dbReference type="Proteomes" id="UP000005216">
    <property type="component" value="Chromosome"/>
</dbReference>
<dbReference type="GO" id="GO:0005829">
    <property type="term" value="C:cytosol"/>
    <property type="evidence" value="ECO:0007669"/>
    <property type="project" value="TreeGrafter"/>
</dbReference>
<dbReference type="GO" id="GO:0004372">
    <property type="term" value="F:glycine hydroxymethyltransferase activity"/>
    <property type="evidence" value="ECO:0007669"/>
    <property type="project" value="UniProtKB-UniRule"/>
</dbReference>
<dbReference type="GO" id="GO:0030170">
    <property type="term" value="F:pyridoxal phosphate binding"/>
    <property type="evidence" value="ECO:0007669"/>
    <property type="project" value="UniProtKB-UniRule"/>
</dbReference>
<dbReference type="GO" id="GO:0019264">
    <property type="term" value="P:glycine biosynthetic process from serine"/>
    <property type="evidence" value="ECO:0007669"/>
    <property type="project" value="UniProtKB-UniRule"/>
</dbReference>
<dbReference type="GO" id="GO:0035999">
    <property type="term" value="P:tetrahydrofolate interconversion"/>
    <property type="evidence" value="ECO:0007669"/>
    <property type="project" value="UniProtKB-UniRule"/>
</dbReference>
<dbReference type="CDD" id="cd00378">
    <property type="entry name" value="SHMT"/>
    <property type="match status" value="1"/>
</dbReference>
<dbReference type="FunFam" id="3.40.640.10:FF:000001">
    <property type="entry name" value="Serine hydroxymethyltransferase"/>
    <property type="match status" value="1"/>
</dbReference>
<dbReference type="Gene3D" id="3.90.1150.10">
    <property type="entry name" value="Aspartate Aminotransferase, domain 1"/>
    <property type="match status" value="1"/>
</dbReference>
<dbReference type="Gene3D" id="3.40.640.10">
    <property type="entry name" value="Type I PLP-dependent aspartate aminotransferase-like (Major domain)"/>
    <property type="match status" value="1"/>
</dbReference>
<dbReference type="HAMAP" id="MF_00051">
    <property type="entry name" value="SHMT"/>
    <property type="match status" value="1"/>
</dbReference>
<dbReference type="InterPro" id="IPR015424">
    <property type="entry name" value="PyrdxlP-dep_Trfase"/>
</dbReference>
<dbReference type="InterPro" id="IPR015421">
    <property type="entry name" value="PyrdxlP-dep_Trfase_major"/>
</dbReference>
<dbReference type="InterPro" id="IPR015422">
    <property type="entry name" value="PyrdxlP-dep_Trfase_small"/>
</dbReference>
<dbReference type="InterPro" id="IPR001085">
    <property type="entry name" value="Ser_HO-MeTrfase"/>
</dbReference>
<dbReference type="InterPro" id="IPR049943">
    <property type="entry name" value="Ser_HO-MeTrfase-like"/>
</dbReference>
<dbReference type="InterPro" id="IPR019798">
    <property type="entry name" value="Ser_HO-MeTrfase_PLP_BS"/>
</dbReference>
<dbReference type="InterPro" id="IPR039429">
    <property type="entry name" value="SHMT-like_dom"/>
</dbReference>
<dbReference type="NCBIfam" id="NF000586">
    <property type="entry name" value="PRK00011.1"/>
    <property type="match status" value="1"/>
</dbReference>
<dbReference type="PANTHER" id="PTHR11680">
    <property type="entry name" value="SERINE HYDROXYMETHYLTRANSFERASE"/>
    <property type="match status" value="1"/>
</dbReference>
<dbReference type="PANTHER" id="PTHR11680:SF35">
    <property type="entry name" value="SERINE HYDROXYMETHYLTRANSFERASE 1"/>
    <property type="match status" value="1"/>
</dbReference>
<dbReference type="Pfam" id="PF00464">
    <property type="entry name" value="SHMT"/>
    <property type="match status" value="1"/>
</dbReference>
<dbReference type="PIRSF" id="PIRSF000412">
    <property type="entry name" value="SHMT"/>
    <property type="match status" value="1"/>
</dbReference>
<dbReference type="SUPFAM" id="SSF53383">
    <property type="entry name" value="PLP-dependent transferases"/>
    <property type="match status" value="1"/>
</dbReference>
<dbReference type="PROSITE" id="PS00096">
    <property type="entry name" value="SHMT"/>
    <property type="match status" value="1"/>
</dbReference>
<gene>
    <name evidence="1" type="primary">glyA</name>
    <name type="ordered locus">BAPKO_0634</name>
    <name type="ordered locus">BafPKo_0618</name>
</gene>
<organism>
    <name type="scientific">Borreliella afzelii (strain PKo)</name>
    <name type="common">Borrelia afzelii</name>
    <dbReference type="NCBI Taxonomy" id="390236"/>
    <lineage>
        <taxon>Bacteria</taxon>
        <taxon>Pseudomonadati</taxon>
        <taxon>Spirochaetota</taxon>
        <taxon>Spirochaetia</taxon>
        <taxon>Spirochaetales</taxon>
        <taxon>Borreliaceae</taxon>
        <taxon>Borreliella</taxon>
    </lineage>
</organism>
<proteinExistence type="inferred from homology"/>